<proteinExistence type="inferred from homology"/>
<dbReference type="EMBL" id="AM884177">
    <property type="protein sequence ID" value="CAP07038.1"/>
    <property type="molecule type" value="Genomic_DNA"/>
</dbReference>
<dbReference type="RefSeq" id="WP_009871740.1">
    <property type="nucleotide sequence ID" value="NC_010280.2"/>
</dbReference>
<dbReference type="SMR" id="B0BC23"/>
<dbReference type="KEGG" id="ctl:CTLon_0641"/>
<dbReference type="HOGENOM" id="CLU_130694_6_2_0"/>
<dbReference type="Proteomes" id="UP001154401">
    <property type="component" value="Chromosome"/>
</dbReference>
<dbReference type="GO" id="GO:0005737">
    <property type="term" value="C:cytoplasm"/>
    <property type="evidence" value="ECO:0007669"/>
    <property type="project" value="TreeGrafter"/>
</dbReference>
<dbReference type="Gene3D" id="3.30.1200.10">
    <property type="entry name" value="YggU-like"/>
    <property type="match status" value="1"/>
</dbReference>
<dbReference type="HAMAP" id="MF_00634">
    <property type="entry name" value="UPF0235"/>
    <property type="match status" value="1"/>
</dbReference>
<dbReference type="InterPro" id="IPR003746">
    <property type="entry name" value="DUF167"/>
</dbReference>
<dbReference type="InterPro" id="IPR036591">
    <property type="entry name" value="YggU-like_sf"/>
</dbReference>
<dbReference type="NCBIfam" id="TIGR00251">
    <property type="entry name" value="DUF167 family protein"/>
    <property type="match status" value="1"/>
</dbReference>
<dbReference type="NCBIfam" id="NF001887">
    <property type="entry name" value="PRK00647.1"/>
    <property type="match status" value="1"/>
</dbReference>
<dbReference type="PANTHER" id="PTHR13420">
    <property type="entry name" value="UPF0235 PROTEIN C15ORF40"/>
    <property type="match status" value="1"/>
</dbReference>
<dbReference type="PANTHER" id="PTHR13420:SF7">
    <property type="entry name" value="UPF0235 PROTEIN C15ORF40"/>
    <property type="match status" value="1"/>
</dbReference>
<dbReference type="Pfam" id="PF02594">
    <property type="entry name" value="DUF167"/>
    <property type="match status" value="1"/>
</dbReference>
<dbReference type="SMART" id="SM01152">
    <property type="entry name" value="DUF167"/>
    <property type="match status" value="1"/>
</dbReference>
<dbReference type="SUPFAM" id="SSF69786">
    <property type="entry name" value="YggU-like"/>
    <property type="match status" value="1"/>
</dbReference>
<protein>
    <recommendedName>
        <fullName evidence="1">UPF0235 protein CTLon_0641</fullName>
    </recommendedName>
</protein>
<gene>
    <name type="ordered locus">CTLon_0641</name>
</gene>
<feature type="chain" id="PRO_1000130675" description="UPF0235 protein CTLon_0641">
    <location>
        <begin position="1"/>
        <end position="115"/>
    </location>
</feature>
<name>Y641_CHLTB</name>
<comment type="similarity">
    <text evidence="1">Belongs to the UPF0235 family.</text>
</comment>
<organism>
    <name type="scientific">Chlamydia trachomatis serovar L2b (strain UCH-1/proctitis)</name>
    <dbReference type="NCBI Taxonomy" id="471473"/>
    <lineage>
        <taxon>Bacteria</taxon>
        <taxon>Pseudomonadati</taxon>
        <taxon>Chlamydiota</taxon>
        <taxon>Chlamydiia</taxon>
        <taxon>Chlamydiales</taxon>
        <taxon>Chlamydiaceae</taxon>
        <taxon>Chlamydia/Chlamydophila group</taxon>
        <taxon>Chlamydia</taxon>
    </lineage>
</organism>
<reference key="1">
    <citation type="journal article" date="2008" name="Genome Res.">
        <title>Chlamydia trachomatis: genome sequence analysis of lymphogranuloma venereum isolates.</title>
        <authorList>
            <person name="Thomson N.R."/>
            <person name="Holden M.T.G."/>
            <person name="Carder C."/>
            <person name="Lennard N."/>
            <person name="Lockey S.J."/>
            <person name="Marsh P."/>
            <person name="Skipp P."/>
            <person name="O'Connor C.D."/>
            <person name="Goodhead I."/>
            <person name="Norbertzcak H."/>
            <person name="Harris B."/>
            <person name="Ormond D."/>
            <person name="Rance R."/>
            <person name="Quail M.A."/>
            <person name="Parkhill J."/>
            <person name="Stephens R.S."/>
            <person name="Clarke I.N."/>
        </authorList>
    </citation>
    <scope>NUCLEOTIDE SEQUENCE [LARGE SCALE GENOMIC DNA]</scope>
    <source>
        <strain>UCH-1/proctitis</strain>
    </source>
</reference>
<sequence length="115" mass="12867">MRFLLKLLSKEKENILLEGFWVLEVRVTTKARENRVVCLEDGILRVRVTEVPEKGKANDAVVALLANFLSIPKSDVTLIAGEASRRKKVLLPRSIKAFLLEQFPSESSSTTGKKS</sequence>
<accession>B0BC23</accession>
<evidence type="ECO:0000255" key="1">
    <source>
        <dbReference type="HAMAP-Rule" id="MF_00634"/>
    </source>
</evidence>